<evidence type="ECO:0000250" key="1">
    <source>
        <dbReference type="UniProtKB" id="Q0CCY3"/>
    </source>
</evidence>
<evidence type="ECO:0000250" key="2">
    <source>
        <dbReference type="UniProtKB" id="Q0CCY4"/>
    </source>
</evidence>
<evidence type="ECO:0000250" key="3">
    <source>
        <dbReference type="UniProtKB" id="Q988B9"/>
    </source>
</evidence>
<evidence type="ECO:0000255" key="4"/>
<evidence type="ECO:0000269" key="5">
    <source>
    </source>
</evidence>
<evidence type="ECO:0000269" key="6">
    <source>
    </source>
</evidence>
<evidence type="ECO:0000269" key="7">
    <source>
    </source>
</evidence>
<evidence type="ECO:0000303" key="8">
    <source>
    </source>
</evidence>
<evidence type="ECO:0000303" key="9">
    <source>
    </source>
</evidence>
<evidence type="ECO:0000305" key="10"/>
<evidence type="ECO:0000305" key="11">
    <source>
    </source>
</evidence>
<gene>
    <name evidence="8" type="primary">tpcB</name>
    <name evidence="9" type="synonym">tynB</name>
    <name type="ORF">AFUA_4G14570</name>
</gene>
<keyword id="KW-0378">Hydrolase</keyword>
<keyword id="KW-0479">Metal-binding</keyword>
<keyword id="KW-1185">Reference proteome</keyword>
<keyword id="KW-0862">Zinc</keyword>
<proteinExistence type="evidence at transcript level"/>
<accession>Q4WQZ6</accession>
<dbReference type="EC" id="3.1.2.-" evidence="2"/>
<dbReference type="EMBL" id="AAHF01000005">
    <property type="protein sequence ID" value="EAL89338.1"/>
    <property type="molecule type" value="Genomic_DNA"/>
</dbReference>
<dbReference type="RefSeq" id="XP_751376.1">
    <property type="nucleotide sequence ID" value="XM_746283.1"/>
</dbReference>
<dbReference type="SMR" id="Q4WQZ6"/>
<dbReference type="STRING" id="330879.Q4WQZ6"/>
<dbReference type="EnsemblFungi" id="EAL89338">
    <property type="protein sequence ID" value="EAL89338"/>
    <property type="gene ID" value="AFUA_4G14570"/>
</dbReference>
<dbReference type="GeneID" id="3509594"/>
<dbReference type="KEGG" id="afm:AFUA_4G14570"/>
<dbReference type="VEuPathDB" id="FungiDB:Afu4g14570"/>
<dbReference type="eggNOG" id="KOG0813">
    <property type="taxonomic scope" value="Eukaryota"/>
</dbReference>
<dbReference type="HOGENOM" id="CLU_048478_1_0_1"/>
<dbReference type="InParanoid" id="Q4WQZ6"/>
<dbReference type="OMA" id="QLVTAMH"/>
<dbReference type="OrthoDB" id="17458at2759"/>
<dbReference type="Proteomes" id="UP000002530">
    <property type="component" value="Chromosome 4"/>
</dbReference>
<dbReference type="GO" id="GO:0016787">
    <property type="term" value="F:hydrolase activity"/>
    <property type="evidence" value="ECO:0007669"/>
    <property type="project" value="UniProtKB-KW"/>
</dbReference>
<dbReference type="GO" id="GO:0046872">
    <property type="term" value="F:metal ion binding"/>
    <property type="evidence" value="ECO:0007669"/>
    <property type="project" value="UniProtKB-KW"/>
</dbReference>
<dbReference type="GO" id="GO:0044550">
    <property type="term" value="P:secondary metabolite biosynthetic process"/>
    <property type="evidence" value="ECO:0000315"/>
    <property type="project" value="AspGD"/>
</dbReference>
<dbReference type="CDD" id="cd07722">
    <property type="entry name" value="LACTB2-like_MBL-fold"/>
    <property type="match status" value="1"/>
</dbReference>
<dbReference type="FunFam" id="3.60.15.10:FF:000041">
    <property type="entry name" value="Metallo-beta-lactamase domain protein"/>
    <property type="match status" value="1"/>
</dbReference>
<dbReference type="Gene3D" id="3.60.15.10">
    <property type="entry name" value="Ribonuclease Z/Hydroxyacylglutathione hydrolase-like"/>
    <property type="match status" value="1"/>
</dbReference>
<dbReference type="Gene3D" id="1.10.10.10">
    <property type="entry name" value="Winged helix-like DNA-binding domain superfamily/Winged helix DNA-binding domain"/>
    <property type="match status" value="1"/>
</dbReference>
<dbReference type="InterPro" id="IPR047921">
    <property type="entry name" value="LACTB2-like_MBL-fold"/>
</dbReference>
<dbReference type="InterPro" id="IPR001279">
    <property type="entry name" value="Metallo-B-lactamas"/>
</dbReference>
<dbReference type="InterPro" id="IPR036866">
    <property type="entry name" value="RibonucZ/Hydroxyglut_hydro"/>
</dbReference>
<dbReference type="InterPro" id="IPR050662">
    <property type="entry name" value="Sec-metab_biosynth-thioest"/>
</dbReference>
<dbReference type="InterPro" id="IPR036388">
    <property type="entry name" value="WH-like_DNA-bd_sf"/>
</dbReference>
<dbReference type="PANTHER" id="PTHR23131:SF3">
    <property type="entry name" value="ATROCHRYSONE CARBOXYL ACP THIOESTERASE"/>
    <property type="match status" value="1"/>
</dbReference>
<dbReference type="PANTHER" id="PTHR23131">
    <property type="entry name" value="ENDORIBONUCLEASE LACTB2"/>
    <property type="match status" value="1"/>
</dbReference>
<dbReference type="Pfam" id="PF00753">
    <property type="entry name" value="Lactamase_B"/>
    <property type="match status" value="1"/>
</dbReference>
<dbReference type="SMART" id="SM00849">
    <property type="entry name" value="Lactamase_B"/>
    <property type="match status" value="1"/>
</dbReference>
<dbReference type="SUPFAM" id="SSF56281">
    <property type="entry name" value="Metallo-hydrolase/oxidoreductase"/>
    <property type="match status" value="1"/>
</dbReference>
<sequence>MLALHQTQRDVPCSEVHDALGLQGARSIYFGRPTGRSILSDPIRPRPMPTVTVIIYSDIRFLLEFPSVFLCAYVLPVQRTVIMANEKRGGYRQINQALNICAWEGYLNEQHARLPTLEDVEQISPRVLRVLGQNEGKVRRADGYYTCSSRLIEGPQFTLQGTNTYIVGTGRHRLLIDTGQGIPEWASLISSTLAGSSIELSHVLLTHWHGDHTGGVPDLLRMYPDLSDSIYKHTPGKGQKPISDGQTFRVEGATVRAVHTPGHSHDHMCFILEEENAMFTGDNVLGHGSSAVEVLSTWMSSLRMMQSLRCAVGYPAHGAVIRDLPSKLDLELTQKARREDRVVETLKQMKTETQRNGARGKGSVTVQQLVTAMHGHDLDEQVRTMALEPFVDEVLRKLAQDDRVAFEVRGGQKKWFAIEYT</sequence>
<feature type="chain" id="PRO_0000437056" description="Atrochrysone carboxyl ACP thioesterase">
    <location>
        <begin position="1"/>
        <end position="421"/>
    </location>
</feature>
<feature type="active site" description="Proton donor/acceptor" evidence="4">
    <location>
        <position position="211"/>
    </location>
</feature>
<feature type="binding site" evidence="3">
    <location>
        <position position="207"/>
    </location>
    <ligand>
        <name>Zn(2+)</name>
        <dbReference type="ChEBI" id="CHEBI:29105"/>
        <label>1</label>
        <note>catalytic</note>
    </ligand>
</feature>
<feature type="binding site" evidence="3">
    <location>
        <position position="209"/>
    </location>
    <ligand>
        <name>Zn(2+)</name>
        <dbReference type="ChEBI" id="CHEBI:29105"/>
        <label>1</label>
        <note>catalytic</note>
    </ligand>
</feature>
<feature type="binding site" evidence="3">
    <location>
        <position position="211"/>
    </location>
    <ligand>
        <name>Zn(2+)</name>
        <dbReference type="ChEBI" id="CHEBI:29105"/>
        <label>2</label>
        <note>catalytic</note>
    </ligand>
</feature>
<feature type="binding site" evidence="3">
    <location>
        <position position="212"/>
    </location>
    <ligand>
        <name>Zn(2+)</name>
        <dbReference type="ChEBI" id="CHEBI:29105"/>
        <label>2</label>
        <note>catalytic</note>
    </ligand>
</feature>
<comment type="function">
    <text evidence="1 5 6 7">Atrochrysone carboxyl ACP thioesterase; part of the gene cluster that mediates the biosynthesis of trypacidin, a mycotoxin with antiprotozoal activity and that plays a role in the infection process (PubMed:26242966, PubMed:26278536). The pathway begins with the synthesis of atrochrysone thioester by the polyketide synthase (PKS) tpcC (PubMed:26242966). The atrochrysone carboxyl ACP thioesterase tpcB then breaks the thioester bond and releases the atrochrysone carboxylic acid from tpcC (PubMed:26242966). The decarboxylase tpcK converts atrochrysone carboxylic acid to atrochrysone which is further reduced into emodin anthrone (PubMed:26242966). The next step is performed by the emodin anthrone oxygenase tpcL that catalyzes the oxidation of emodin anthrone to emodin (PubMed:26242966). Emodin O-methyltransferase encoded by tpcA catalyzes methylation of the 8-hydroxy group of emodin to form questin (PubMed:26242966). Ring cleavage of questin by questin oxidase tpcI leads to desmethylsulochrin via several intermediates including questin epoxide (By similarity). Another methylation step catalyzed by tpcM leads to the formation of sulochrin which is further converted to monomethylsulfochrin by tpcH. Finally, the tpcJ catalyzes the conversion of monomethylsulfochrin to trypacidin (PubMed:26242966). Trypacidin is toxic for human pulmonary and bronchial epithelial cells by initiating the intracellular formation of nitric oxide (NO) and hydrogen peroxide (H(2)O(2)), thus triggering host necrotic cell death (PubMed:22319557). The trypacidin pathway is also able to produce endocrocin via a distinct route from the endocrocin Enc pathway (PubMed:26242966).</text>
</comment>
<comment type="catalytic activity">
    <reaction evidence="2">
        <text>atrochrysone carboxyl-[ACP] + H2O = atrochrysone carboxylate + holo-[ACP] + H(+)</text>
        <dbReference type="Rhea" id="RHEA:64236"/>
        <dbReference type="Rhea" id="RHEA-COMP:9685"/>
        <dbReference type="Rhea" id="RHEA-COMP:16552"/>
        <dbReference type="ChEBI" id="CHEBI:15377"/>
        <dbReference type="ChEBI" id="CHEBI:15378"/>
        <dbReference type="ChEBI" id="CHEBI:64479"/>
        <dbReference type="ChEBI" id="CHEBI:149712"/>
        <dbReference type="ChEBI" id="CHEBI:149713"/>
    </reaction>
    <physiologicalReaction direction="left-to-right" evidence="2">
        <dbReference type="Rhea" id="RHEA:64237"/>
    </physiologicalReaction>
</comment>
<comment type="cofactor">
    <cofactor evidence="3">
        <name>Zn(2+)</name>
        <dbReference type="ChEBI" id="CHEBI:29105"/>
    </cofactor>
    <text evidence="3">Binds 2 Zn(2+) ions per subunit.</text>
</comment>
<comment type="pathway">
    <text evidence="6 7">Secondary metabolite biosynthesis.</text>
</comment>
<comment type="tissue specificity">
    <text evidence="11">Specifically expressed in conidia (PubMed:22319557).</text>
</comment>
<comment type="induction">
    <text evidence="6">Expression is positively regulated by the transcription factors brlA and laeA (PubMed:26242966).</text>
</comment>
<comment type="disruption phenotype">
    <text evidence="6 7">Impairs the production of trypacidin and pathway intermediates including questin (PubMed:26242966, PubMed:26278536).</text>
</comment>
<comment type="similarity">
    <text evidence="10">Belongs to the metallo-beta-lactamase superfamily.</text>
</comment>
<protein>
    <recommendedName>
        <fullName evidence="2">Atrochrysone carboxyl ACP thioesterase</fullName>
        <shortName evidence="2">ACTE</shortName>
        <ecNumber evidence="2">3.1.2.-</ecNumber>
    </recommendedName>
    <alternativeName>
        <fullName evidence="8">Trypacidin synthesis protein B</fullName>
    </alternativeName>
</protein>
<organism>
    <name type="scientific">Aspergillus fumigatus (strain ATCC MYA-4609 / CBS 101355 / FGSC A1100 / Af293)</name>
    <name type="common">Neosartorya fumigata</name>
    <dbReference type="NCBI Taxonomy" id="330879"/>
    <lineage>
        <taxon>Eukaryota</taxon>
        <taxon>Fungi</taxon>
        <taxon>Dikarya</taxon>
        <taxon>Ascomycota</taxon>
        <taxon>Pezizomycotina</taxon>
        <taxon>Eurotiomycetes</taxon>
        <taxon>Eurotiomycetidae</taxon>
        <taxon>Eurotiales</taxon>
        <taxon>Aspergillaceae</taxon>
        <taxon>Aspergillus</taxon>
        <taxon>Aspergillus subgen. Fumigati</taxon>
    </lineage>
</organism>
<name>TPCB_ASPFU</name>
<reference key="1">
    <citation type="journal article" date="2005" name="Nature">
        <title>Genomic sequence of the pathogenic and allergenic filamentous fungus Aspergillus fumigatus.</title>
        <authorList>
            <person name="Nierman W.C."/>
            <person name="Pain A."/>
            <person name="Anderson M.J."/>
            <person name="Wortman J.R."/>
            <person name="Kim H.S."/>
            <person name="Arroyo J."/>
            <person name="Berriman M."/>
            <person name="Abe K."/>
            <person name="Archer D.B."/>
            <person name="Bermejo C."/>
            <person name="Bennett J.W."/>
            <person name="Bowyer P."/>
            <person name="Chen D."/>
            <person name="Collins M."/>
            <person name="Coulsen R."/>
            <person name="Davies R."/>
            <person name="Dyer P.S."/>
            <person name="Farman M.L."/>
            <person name="Fedorova N."/>
            <person name="Fedorova N.D."/>
            <person name="Feldblyum T.V."/>
            <person name="Fischer R."/>
            <person name="Fosker N."/>
            <person name="Fraser A."/>
            <person name="Garcia J.L."/>
            <person name="Garcia M.J."/>
            <person name="Goble A."/>
            <person name="Goldman G.H."/>
            <person name="Gomi K."/>
            <person name="Griffith-Jones S."/>
            <person name="Gwilliam R."/>
            <person name="Haas B.J."/>
            <person name="Haas H."/>
            <person name="Harris D.E."/>
            <person name="Horiuchi H."/>
            <person name="Huang J."/>
            <person name="Humphray S."/>
            <person name="Jimenez J."/>
            <person name="Keller N."/>
            <person name="Khouri H."/>
            <person name="Kitamoto K."/>
            <person name="Kobayashi T."/>
            <person name="Konzack S."/>
            <person name="Kulkarni R."/>
            <person name="Kumagai T."/>
            <person name="Lafton A."/>
            <person name="Latge J.-P."/>
            <person name="Li W."/>
            <person name="Lord A."/>
            <person name="Lu C."/>
            <person name="Majoros W.H."/>
            <person name="May G.S."/>
            <person name="Miller B.L."/>
            <person name="Mohamoud Y."/>
            <person name="Molina M."/>
            <person name="Monod M."/>
            <person name="Mouyna I."/>
            <person name="Mulligan S."/>
            <person name="Murphy L.D."/>
            <person name="O'Neil S."/>
            <person name="Paulsen I."/>
            <person name="Penalva M.A."/>
            <person name="Pertea M."/>
            <person name="Price C."/>
            <person name="Pritchard B.L."/>
            <person name="Quail M.A."/>
            <person name="Rabbinowitsch E."/>
            <person name="Rawlins N."/>
            <person name="Rajandream M.A."/>
            <person name="Reichard U."/>
            <person name="Renauld H."/>
            <person name="Robson G.D."/>
            <person name="Rodriguez de Cordoba S."/>
            <person name="Rodriguez-Pena J.M."/>
            <person name="Ronning C.M."/>
            <person name="Rutter S."/>
            <person name="Salzberg S.L."/>
            <person name="Sanchez M."/>
            <person name="Sanchez-Ferrero J.C."/>
            <person name="Saunders D."/>
            <person name="Seeger K."/>
            <person name="Squares R."/>
            <person name="Squares S."/>
            <person name="Takeuchi M."/>
            <person name="Tekaia F."/>
            <person name="Turner G."/>
            <person name="Vazquez de Aldana C.R."/>
            <person name="Weidman J."/>
            <person name="White O."/>
            <person name="Woodward J.R."/>
            <person name="Yu J.-H."/>
            <person name="Fraser C.M."/>
            <person name="Galagan J.E."/>
            <person name="Asai K."/>
            <person name="Machida M."/>
            <person name="Hall N."/>
            <person name="Barrell B.G."/>
            <person name="Denning D.W."/>
        </authorList>
    </citation>
    <scope>NUCLEOTIDE SEQUENCE [LARGE SCALE GENOMIC DNA]</scope>
    <source>
        <strain>ATCC MYA-4609 / CBS 101355 / FGSC A1100 / Af293</strain>
    </source>
</reference>
<reference key="2">
    <citation type="journal article" date="2012" name="PLoS ONE">
        <title>Trypacidin, a spore-borne toxin from Aspergillus fumigatus, is cytotoxic to lung cells.</title>
        <authorList>
            <person name="Gauthier T."/>
            <person name="Wang X."/>
            <person name="Sifuentes Dos Santos J."/>
            <person name="Fysikopoulos A."/>
            <person name="Tadrist S."/>
            <person name="Canlet C."/>
            <person name="Artigot M.P."/>
            <person name="Loiseau N."/>
            <person name="Oswald I.P."/>
            <person name="Puel O."/>
        </authorList>
    </citation>
    <scope>FUNCTION</scope>
    <scope>TISSUE SPECIFICITY</scope>
</reference>
<reference key="3">
    <citation type="journal article" date="2015" name="Appl. Microbiol. Biotechnol.">
        <title>Identification of the antiphagocytic trypacidin gene cluster in the human-pathogenic fungus Aspergillus fumigatus.</title>
        <authorList>
            <person name="Mattern D.J."/>
            <person name="Schoeler H."/>
            <person name="Weber J."/>
            <person name="Novohradska S."/>
            <person name="Kraibooj K."/>
            <person name="Dahse H.M."/>
            <person name="Hillmann F."/>
            <person name="Valiante V."/>
            <person name="Figge M.T."/>
            <person name="Brakhage A.A."/>
        </authorList>
    </citation>
    <scope>FUNCTION</scope>
</reference>
<reference key="4">
    <citation type="journal article" date="2016" name="Environ. Microbiol.">
        <title>Redundant synthesis of a conidial polyketide by two distinct secondary metabolite clusters in Aspergillus fumigatus.</title>
        <authorList>
            <person name="Throckmorton K."/>
            <person name="Lim F.Y."/>
            <person name="Kontoyiannis D.P."/>
            <person name="Zheng W."/>
            <person name="Keller N.P."/>
        </authorList>
    </citation>
    <scope>FUNCTION</scope>
    <scope>DISRUPTION PHENOTYPE</scope>
    <scope>INDUCTION</scope>
</reference>